<proteinExistence type="inferred from homology"/>
<organism>
    <name type="scientific">Paracidovorax citrulli (strain AAC00-1)</name>
    <name type="common">Acidovorax citrulli</name>
    <dbReference type="NCBI Taxonomy" id="397945"/>
    <lineage>
        <taxon>Bacteria</taxon>
        <taxon>Pseudomonadati</taxon>
        <taxon>Pseudomonadota</taxon>
        <taxon>Betaproteobacteria</taxon>
        <taxon>Burkholderiales</taxon>
        <taxon>Comamonadaceae</taxon>
        <taxon>Paracidovorax</taxon>
    </lineage>
</organism>
<evidence type="ECO:0000255" key="1">
    <source>
        <dbReference type="HAMAP-Rule" id="MF_01368"/>
    </source>
</evidence>
<evidence type="ECO:0000305" key="2"/>
<feature type="chain" id="PRO_1000055756" description="Large ribosomal subunit protein bL17">
    <location>
        <begin position="1"/>
        <end position="134"/>
    </location>
</feature>
<keyword id="KW-0687">Ribonucleoprotein</keyword>
<keyword id="KW-0689">Ribosomal protein</keyword>
<reference key="1">
    <citation type="submission" date="2006-12" db="EMBL/GenBank/DDBJ databases">
        <title>Complete sequence of Acidovorax avenae subsp. citrulli AAC00-1.</title>
        <authorList>
            <person name="Copeland A."/>
            <person name="Lucas S."/>
            <person name="Lapidus A."/>
            <person name="Barry K."/>
            <person name="Detter J.C."/>
            <person name="Glavina del Rio T."/>
            <person name="Dalin E."/>
            <person name="Tice H."/>
            <person name="Pitluck S."/>
            <person name="Kiss H."/>
            <person name="Brettin T."/>
            <person name="Bruce D."/>
            <person name="Han C."/>
            <person name="Tapia R."/>
            <person name="Gilna P."/>
            <person name="Schmutz J."/>
            <person name="Larimer F."/>
            <person name="Land M."/>
            <person name="Hauser L."/>
            <person name="Kyrpides N."/>
            <person name="Kim E."/>
            <person name="Stahl D."/>
            <person name="Richardson P."/>
        </authorList>
    </citation>
    <scope>NUCLEOTIDE SEQUENCE [LARGE SCALE GENOMIC DNA]</scope>
    <source>
        <strain>AAC00-1</strain>
    </source>
</reference>
<gene>
    <name evidence="1" type="primary">rplQ</name>
    <name type="ordered locus">Aave_0627</name>
</gene>
<accession>A1TJU3</accession>
<dbReference type="EMBL" id="CP000512">
    <property type="protein sequence ID" value="ABM31231.1"/>
    <property type="molecule type" value="Genomic_DNA"/>
</dbReference>
<dbReference type="RefSeq" id="WP_011793802.1">
    <property type="nucleotide sequence ID" value="NC_008752.1"/>
</dbReference>
<dbReference type="SMR" id="A1TJU3"/>
<dbReference type="STRING" id="397945.Aave_0627"/>
<dbReference type="KEGG" id="aav:Aave_0627"/>
<dbReference type="eggNOG" id="COG0203">
    <property type="taxonomic scope" value="Bacteria"/>
</dbReference>
<dbReference type="HOGENOM" id="CLU_074407_2_0_4"/>
<dbReference type="OrthoDB" id="9809073at2"/>
<dbReference type="Proteomes" id="UP000002596">
    <property type="component" value="Chromosome"/>
</dbReference>
<dbReference type="GO" id="GO:0022625">
    <property type="term" value="C:cytosolic large ribosomal subunit"/>
    <property type="evidence" value="ECO:0007669"/>
    <property type="project" value="TreeGrafter"/>
</dbReference>
<dbReference type="GO" id="GO:0003735">
    <property type="term" value="F:structural constituent of ribosome"/>
    <property type="evidence" value="ECO:0007669"/>
    <property type="project" value="InterPro"/>
</dbReference>
<dbReference type="GO" id="GO:0006412">
    <property type="term" value="P:translation"/>
    <property type="evidence" value="ECO:0007669"/>
    <property type="project" value="UniProtKB-UniRule"/>
</dbReference>
<dbReference type="FunFam" id="3.90.1030.10:FF:000001">
    <property type="entry name" value="50S ribosomal protein L17"/>
    <property type="match status" value="1"/>
</dbReference>
<dbReference type="Gene3D" id="3.90.1030.10">
    <property type="entry name" value="Ribosomal protein L17"/>
    <property type="match status" value="1"/>
</dbReference>
<dbReference type="HAMAP" id="MF_01368">
    <property type="entry name" value="Ribosomal_bL17"/>
    <property type="match status" value="1"/>
</dbReference>
<dbReference type="InterPro" id="IPR000456">
    <property type="entry name" value="Ribosomal_bL17"/>
</dbReference>
<dbReference type="InterPro" id="IPR047859">
    <property type="entry name" value="Ribosomal_bL17_CS"/>
</dbReference>
<dbReference type="InterPro" id="IPR036373">
    <property type="entry name" value="Ribosomal_bL17_sf"/>
</dbReference>
<dbReference type="NCBIfam" id="TIGR00059">
    <property type="entry name" value="L17"/>
    <property type="match status" value="1"/>
</dbReference>
<dbReference type="PANTHER" id="PTHR14413:SF16">
    <property type="entry name" value="LARGE RIBOSOMAL SUBUNIT PROTEIN BL17M"/>
    <property type="match status" value="1"/>
</dbReference>
<dbReference type="PANTHER" id="PTHR14413">
    <property type="entry name" value="RIBOSOMAL PROTEIN L17"/>
    <property type="match status" value="1"/>
</dbReference>
<dbReference type="Pfam" id="PF01196">
    <property type="entry name" value="Ribosomal_L17"/>
    <property type="match status" value="1"/>
</dbReference>
<dbReference type="SUPFAM" id="SSF64263">
    <property type="entry name" value="Prokaryotic ribosomal protein L17"/>
    <property type="match status" value="1"/>
</dbReference>
<dbReference type="PROSITE" id="PS01167">
    <property type="entry name" value="RIBOSOMAL_L17"/>
    <property type="match status" value="1"/>
</dbReference>
<comment type="subunit">
    <text evidence="1">Part of the 50S ribosomal subunit. Contacts protein L32.</text>
</comment>
<comment type="similarity">
    <text evidence="1">Belongs to the bacterial ribosomal protein bL17 family.</text>
</comment>
<protein>
    <recommendedName>
        <fullName evidence="1">Large ribosomal subunit protein bL17</fullName>
    </recommendedName>
    <alternativeName>
        <fullName evidence="2">50S ribosomal protein L17</fullName>
    </alternativeName>
</protein>
<name>RL17_PARC0</name>
<sequence length="134" mass="15204">MRHGHGLRKLNRTSSHRLAMLQNMMNSLIEHEAIKTTVPKAKELRRVIEPMITLAKEDTVANRRLAFDRLRDRDSVTKLFNVLGPLFKARPGGYTRILKMGYRVGDNAPMAFVEFVERPEVAEVSENSSADAAK</sequence>